<reference key="1">
    <citation type="journal article" date="2004" name="Proc. Natl. Acad. Sci. U.S.A.">
        <title>Complete genomes of two clinical Staphylococcus aureus strains: evidence for the rapid evolution of virulence and drug resistance.</title>
        <authorList>
            <person name="Holden M.T.G."/>
            <person name="Feil E.J."/>
            <person name="Lindsay J.A."/>
            <person name="Peacock S.J."/>
            <person name="Day N.P.J."/>
            <person name="Enright M.C."/>
            <person name="Foster T.J."/>
            <person name="Moore C.E."/>
            <person name="Hurst L."/>
            <person name="Atkin R."/>
            <person name="Barron A."/>
            <person name="Bason N."/>
            <person name="Bentley S.D."/>
            <person name="Chillingworth C."/>
            <person name="Chillingworth T."/>
            <person name="Churcher C."/>
            <person name="Clark L."/>
            <person name="Corton C."/>
            <person name="Cronin A."/>
            <person name="Doggett J."/>
            <person name="Dowd L."/>
            <person name="Feltwell T."/>
            <person name="Hance Z."/>
            <person name="Harris B."/>
            <person name="Hauser H."/>
            <person name="Holroyd S."/>
            <person name="Jagels K."/>
            <person name="James K.D."/>
            <person name="Lennard N."/>
            <person name="Line A."/>
            <person name="Mayes R."/>
            <person name="Moule S."/>
            <person name="Mungall K."/>
            <person name="Ormond D."/>
            <person name="Quail M.A."/>
            <person name="Rabbinowitsch E."/>
            <person name="Rutherford K.M."/>
            <person name="Sanders M."/>
            <person name="Sharp S."/>
            <person name="Simmonds M."/>
            <person name="Stevens K."/>
            <person name="Whitehead S."/>
            <person name="Barrell B.G."/>
            <person name="Spratt B.G."/>
            <person name="Parkhill J."/>
        </authorList>
    </citation>
    <scope>NUCLEOTIDE SEQUENCE [LARGE SCALE GENOMIC DNA]</scope>
    <source>
        <strain>MSSA476</strain>
    </source>
</reference>
<protein>
    <recommendedName>
        <fullName evidence="1">Undecaprenyl-diphosphatase</fullName>
        <ecNumber evidence="1">3.6.1.27</ecNumber>
    </recommendedName>
    <alternativeName>
        <fullName evidence="1">Bacitracin resistance protein</fullName>
    </alternativeName>
    <alternativeName>
        <fullName evidence="1">Undecaprenyl pyrophosphate phosphatase</fullName>
    </alternativeName>
</protein>
<accession>Q6GBE7</accession>
<feature type="chain" id="PRO_0000151202" description="Undecaprenyl-diphosphatase">
    <location>
        <begin position="1"/>
        <end position="291"/>
    </location>
</feature>
<feature type="transmembrane region" description="Helical" evidence="1">
    <location>
        <begin position="1"/>
        <end position="21"/>
    </location>
</feature>
<feature type="transmembrane region" description="Helical" evidence="1">
    <location>
        <begin position="48"/>
        <end position="68"/>
    </location>
</feature>
<feature type="transmembrane region" description="Helical" evidence="1">
    <location>
        <begin position="102"/>
        <end position="122"/>
    </location>
</feature>
<feature type="transmembrane region" description="Helical" evidence="1">
    <location>
        <begin position="126"/>
        <end position="146"/>
    </location>
</feature>
<feature type="transmembrane region" description="Helical" evidence="1">
    <location>
        <begin position="162"/>
        <end position="182"/>
    </location>
</feature>
<feature type="transmembrane region" description="Helical" evidence="1">
    <location>
        <begin position="203"/>
        <end position="223"/>
    </location>
</feature>
<feature type="transmembrane region" description="Helical" evidence="1">
    <location>
        <begin position="236"/>
        <end position="256"/>
    </location>
</feature>
<feature type="transmembrane region" description="Helical" evidence="1">
    <location>
        <begin position="267"/>
        <end position="287"/>
    </location>
</feature>
<sequence>MFIIELIKGIILGVVEGLTEFAPVSSTGHMILVDDMWLKSSEFLGSQSAFTFKIVIQLGSVFAAAWVFRERFLEILHIGKHKHVEGDNNQQRRSKPRRLNLLHVLVGMVPAGILGLLFDDFIEEHLFSVPTVMIGLFVGAIYMIIADKYSAKVKNPQTVDQINYFQAFVIGISQAVAMWPGFSRSGSTISTGVLMKLNHKAASDFTFIMAVPIMLAASGLSLLKHYQDIQITDIPFYILGFLAAFTVGLIAIKTFLHLINKIKLIPFAIYRIVLVIFIAILYFGFGIGKGI</sequence>
<keyword id="KW-0046">Antibiotic resistance</keyword>
<keyword id="KW-1003">Cell membrane</keyword>
<keyword id="KW-0133">Cell shape</keyword>
<keyword id="KW-0961">Cell wall biogenesis/degradation</keyword>
<keyword id="KW-0378">Hydrolase</keyword>
<keyword id="KW-0472">Membrane</keyword>
<keyword id="KW-0573">Peptidoglycan synthesis</keyword>
<keyword id="KW-0812">Transmembrane</keyword>
<keyword id="KW-1133">Transmembrane helix</keyword>
<proteinExistence type="inferred from homology"/>
<evidence type="ECO:0000255" key="1">
    <source>
        <dbReference type="HAMAP-Rule" id="MF_01006"/>
    </source>
</evidence>
<dbReference type="EC" id="3.6.1.27" evidence="1"/>
<dbReference type="EMBL" id="BX571857">
    <property type="protein sequence ID" value="CAG42424.1"/>
    <property type="molecule type" value="Genomic_DNA"/>
</dbReference>
<dbReference type="RefSeq" id="WP_000469892.1">
    <property type="nucleotide sequence ID" value="NC_002953.3"/>
</dbReference>
<dbReference type="SMR" id="Q6GBE7"/>
<dbReference type="KEGG" id="sas:SAS0648"/>
<dbReference type="HOGENOM" id="CLU_060296_2_0_9"/>
<dbReference type="GO" id="GO:0005886">
    <property type="term" value="C:plasma membrane"/>
    <property type="evidence" value="ECO:0007669"/>
    <property type="project" value="UniProtKB-SubCell"/>
</dbReference>
<dbReference type="GO" id="GO:0050380">
    <property type="term" value="F:undecaprenyl-diphosphatase activity"/>
    <property type="evidence" value="ECO:0007669"/>
    <property type="project" value="UniProtKB-UniRule"/>
</dbReference>
<dbReference type="GO" id="GO:0071555">
    <property type="term" value="P:cell wall organization"/>
    <property type="evidence" value="ECO:0007669"/>
    <property type="project" value="UniProtKB-KW"/>
</dbReference>
<dbReference type="GO" id="GO:0009252">
    <property type="term" value="P:peptidoglycan biosynthetic process"/>
    <property type="evidence" value="ECO:0007669"/>
    <property type="project" value="UniProtKB-KW"/>
</dbReference>
<dbReference type="GO" id="GO:0008360">
    <property type="term" value="P:regulation of cell shape"/>
    <property type="evidence" value="ECO:0007669"/>
    <property type="project" value="UniProtKB-KW"/>
</dbReference>
<dbReference type="GO" id="GO:0046677">
    <property type="term" value="P:response to antibiotic"/>
    <property type="evidence" value="ECO:0007669"/>
    <property type="project" value="UniProtKB-UniRule"/>
</dbReference>
<dbReference type="HAMAP" id="MF_01006">
    <property type="entry name" value="Undec_diphosphatase"/>
    <property type="match status" value="1"/>
</dbReference>
<dbReference type="InterPro" id="IPR003824">
    <property type="entry name" value="UppP"/>
</dbReference>
<dbReference type="NCBIfam" id="NF001390">
    <property type="entry name" value="PRK00281.1-4"/>
    <property type="match status" value="1"/>
</dbReference>
<dbReference type="NCBIfam" id="TIGR00753">
    <property type="entry name" value="undec_PP_bacA"/>
    <property type="match status" value="1"/>
</dbReference>
<dbReference type="PANTHER" id="PTHR30622">
    <property type="entry name" value="UNDECAPRENYL-DIPHOSPHATASE"/>
    <property type="match status" value="1"/>
</dbReference>
<dbReference type="PANTHER" id="PTHR30622:SF3">
    <property type="entry name" value="UNDECAPRENYL-DIPHOSPHATASE"/>
    <property type="match status" value="1"/>
</dbReference>
<dbReference type="Pfam" id="PF02673">
    <property type="entry name" value="BacA"/>
    <property type="match status" value="1"/>
</dbReference>
<comment type="function">
    <text evidence="1">Catalyzes the dephosphorylation of undecaprenyl diphosphate (UPP). Confers resistance to bacitracin.</text>
</comment>
<comment type="catalytic activity">
    <reaction evidence="1">
        <text>di-trans,octa-cis-undecaprenyl diphosphate + H2O = di-trans,octa-cis-undecaprenyl phosphate + phosphate + H(+)</text>
        <dbReference type="Rhea" id="RHEA:28094"/>
        <dbReference type="ChEBI" id="CHEBI:15377"/>
        <dbReference type="ChEBI" id="CHEBI:15378"/>
        <dbReference type="ChEBI" id="CHEBI:43474"/>
        <dbReference type="ChEBI" id="CHEBI:58405"/>
        <dbReference type="ChEBI" id="CHEBI:60392"/>
        <dbReference type="EC" id="3.6.1.27"/>
    </reaction>
</comment>
<comment type="subcellular location">
    <subcellularLocation>
        <location evidence="1">Cell membrane</location>
        <topology evidence="1">Multi-pass membrane protein</topology>
    </subcellularLocation>
</comment>
<comment type="miscellaneous">
    <text>Bacitracin is thought to be involved in the inhibition of peptidoglycan synthesis by sequestering undecaprenyl diphosphate, thereby reducing the pool of lipid carrier available.</text>
</comment>
<comment type="similarity">
    <text evidence="1">Belongs to the UppP family.</text>
</comment>
<organism>
    <name type="scientific">Staphylococcus aureus (strain MSSA476)</name>
    <dbReference type="NCBI Taxonomy" id="282459"/>
    <lineage>
        <taxon>Bacteria</taxon>
        <taxon>Bacillati</taxon>
        <taxon>Bacillota</taxon>
        <taxon>Bacilli</taxon>
        <taxon>Bacillales</taxon>
        <taxon>Staphylococcaceae</taxon>
        <taxon>Staphylococcus</taxon>
    </lineage>
</organism>
<name>UPPP_STAAS</name>
<gene>
    <name evidence="1" type="primary">uppP</name>
    <name type="synonym">bacA</name>
    <name type="synonym">upk</name>
    <name type="ordered locus">SAS0648</name>
</gene>